<gene>
    <name evidence="1" type="primary">aspS</name>
    <name type="ordered locus">Saro_1338</name>
</gene>
<keyword id="KW-0030">Aminoacyl-tRNA synthetase</keyword>
<keyword id="KW-0067">ATP-binding</keyword>
<keyword id="KW-0963">Cytoplasm</keyword>
<keyword id="KW-0436">Ligase</keyword>
<keyword id="KW-0547">Nucleotide-binding</keyword>
<keyword id="KW-0648">Protein biosynthesis</keyword>
<keyword id="KW-1185">Reference proteome</keyword>
<name>SYDND_NOVAD</name>
<proteinExistence type="inferred from homology"/>
<protein>
    <recommendedName>
        <fullName evidence="1">Aspartate--tRNA(Asp/Asn) ligase</fullName>
        <ecNumber evidence="1">6.1.1.23</ecNumber>
    </recommendedName>
    <alternativeName>
        <fullName evidence="1">Aspartyl-tRNA synthetase</fullName>
        <shortName evidence="1">AspRS</shortName>
    </alternativeName>
    <alternativeName>
        <fullName evidence="1">Non-discriminating aspartyl-tRNA synthetase</fullName>
        <shortName evidence="1">ND-AspRS</shortName>
    </alternativeName>
</protein>
<evidence type="ECO:0000255" key="1">
    <source>
        <dbReference type="HAMAP-Rule" id="MF_00044"/>
    </source>
</evidence>
<reference key="1">
    <citation type="submission" date="2006-01" db="EMBL/GenBank/DDBJ databases">
        <title>Complete sequence of Novosphingobium aromaticivorans DSM 12444.</title>
        <authorList>
            <consortium name="US DOE Joint Genome Institute"/>
            <person name="Copeland A."/>
            <person name="Lucas S."/>
            <person name="Lapidus A."/>
            <person name="Barry K."/>
            <person name="Detter J.C."/>
            <person name="Glavina T."/>
            <person name="Hammon N."/>
            <person name="Israni S."/>
            <person name="Pitluck S."/>
            <person name="Chain P."/>
            <person name="Malfatti S."/>
            <person name="Shin M."/>
            <person name="Vergez L."/>
            <person name="Schmutz J."/>
            <person name="Larimer F."/>
            <person name="Land M."/>
            <person name="Kyrpides N."/>
            <person name="Ivanova N."/>
            <person name="Fredrickson J."/>
            <person name="Balkwill D."/>
            <person name="Romine M.F."/>
            <person name="Richardson P."/>
        </authorList>
    </citation>
    <scope>NUCLEOTIDE SEQUENCE [LARGE SCALE GENOMIC DNA]</scope>
    <source>
        <strain>ATCC 700278 / DSM 12444 / CCUG 56034 / CIP 105152 / NBRC 16084 / F199</strain>
    </source>
</reference>
<feature type="chain" id="PRO_0000235538" description="Aspartate--tRNA(Asp/Asn) ligase">
    <location>
        <begin position="1"/>
        <end position="593"/>
    </location>
</feature>
<feature type="region of interest" description="Aspartate" evidence="1">
    <location>
        <begin position="199"/>
        <end position="202"/>
    </location>
</feature>
<feature type="binding site" evidence="1">
    <location>
        <position position="175"/>
    </location>
    <ligand>
        <name>L-aspartate</name>
        <dbReference type="ChEBI" id="CHEBI:29991"/>
    </ligand>
</feature>
<feature type="binding site" evidence="1">
    <location>
        <begin position="221"/>
        <end position="223"/>
    </location>
    <ligand>
        <name>ATP</name>
        <dbReference type="ChEBI" id="CHEBI:30616"/>
    </ligand>
</feature>
<feature type="binding site" evidence="1">
    <location>
        <position position="221"/>
    </location>
    <ligand>
        <name>L-aspartate</name>
        <dbReference type="ChEBI" id="CHEBI:29991"/>
    </ligand>
</feature>
<feature type="binding site" evidence="1">
    <location>
        <position position="452"/>
    </location>
    <ligand>
        <name>L-aspartate</name>
        <dbReference type="ChEBI" id="CHEBI:29991"/>
    </ligand>
</feature>
<feature type="binding site" evidence="1">
    <location>
        <position position="486"/>
    </location>
    <ligand>
        <name>ATP</name>
        <dbReference type="ChEBI" id="CHEBI:30616"/>
    </ligand>
</feature>
<feature type="binding site" evidence="1">
    <location>
        <position position="493"/>
    </location>
    <ligand>
        <name>L-aspartate</name>
        <dbReference type="ChEBI" id="CHEBI:29991"/>
    </ligand>
</feature>
<feature type="binding site" evidence="1">
    <location>
        <begin position="538"/>
        <end position="541"/>
    </location>
    <ligand>
        <name>ATP</name>
        <dbReference type="ChEBI" id="CHEBI:30616"/>
    </ligand>
</feature>
<feature type="site" description="Important for tRNA non-discrimination" evidence="1">
    <location>
        <position position="33"/>
    </location>
</feature>
<feature type="site" description="Important for tRNA non-discrimination" evidence="1">
    <location>
        <position position="83"/>
    </location>
</feature>
<organism>
    <name type="scientific">Novosphingobium aromaticivorans (strain ATCC 700278 / DSM 12444 / CCUG 56034 / CIP 105152 / NBRC 16084 / F199)</name>
    <dbReference type="NCBI Taxonomy" id="279238"/>
    <lineage>
        <taxon>Bacteria</taxon>
        <taxon>Pseudomonadati</taxon>
        <taxon>Pseudomonadota</taxon>
        <taxon>Alphaproteobacteria</taxon>
        <taxon>Sphingomonadales</taxon>
        <taxon>Sphingomonadaceae</taxon>
        <taxon>Novosphingobium</taxon>
    </lineage>
</organism>
<comment type="function">
    <text evidence="1">Aspartyl-tRNA synthetase with relaxed tRNA specificity since it is able to aspartylate not only its cognate tRNA(Asp) but also tRNA(Asn). Reaction proceeds in two steps: L-aspartate is first activated by ATP to form Asp-AMP and then transferred to the acceptor end of tRNA(Asp/Asn).</text>
</comment>
<comment type="catalytic activity">
    <reaction evidence="1">
        <text>tRNA(Asx) + L-aspartate + ATP = L-aspartyl-tRNA(Asx) + AMP + diphosphate</text>
        <dbReference type="Rhea" id="RHEA:18349"/>
        <dbReference type="Rhea" id="RHEA-COMP:9710"/>
        <dbReference type="Rhea" id="RHEA-COMP:9711"/>
        <dbReference type="ChEBI" id="CHEBI:29991"/>
        <dbReference type="ChEBI" id="CHEBI:30616"/>
        <dbReference type="ChEBI" id="CHEBI:33019"/>
        <dbReference type="ChEBI" id="CHEBI:78442"/>
        <dbReference type="ChEBI" id="CHEBI:78516"/>
        <dbReference type="ChEBI" id="CHEBI:456215"/>
        <dbReference type="EC" id="6.1.1.23"/>
    </reaction>
</comment>
<comment type="subunit">
    <text evidence="1">Homodimer.</text>
</comment>
<comment type="subcellular location">
    <subcellularLocation>
        <location evidence="1">Cytoplasm</location>
    </subcellularLocation>
</comment>
<comment type="similarity">
    <text evidence="1">Belongs to the class-II aminoacyl-tRNA synthetase family. Type 1 subfamily.</text>
</comment>
<sequence>MHLYRSHTCGALSRGDVGQTVRLSGWVHRKRDHGGVLFVDLRDHYGMTQIVADADSPALPILEALRVESVVTIDGEVKARSEGTVNANLSTGEIEVFARVATVLSAAEELPMPVAGEQEYPEDIRLRYRFLDLRRETLHANIVKRTKVISDMRRRMEGAGFTEYSTPILTASSPEGARDFLVPSRIHPGKFYALPQAPQQYKQLLMVAGFDRYFQIAPCFRDEDPRADRLPGEFYQLDLEMSFVTQEEVWETMEPVIGGVFEAFADGRKVTPIGSFPRIPYAEAMLKYGSDKPDLRNPIIISDVSEEFAQSGFGLFEKIVGTGGVVRLIPAPNTADKSRKFFDEMNDWARAEGHAGLGYVTRKQGEFGGPIAKNHGADKMAALFDRLGLGPDDGCFFAAGKAEQAAKLAGAARTRVADQLGLIDKDRFELCWIVDFPFYEWDEENKKVEFSHNPFSMPQGGLDALNTQDPLTINAFQYDLVCNGFEIASGSIRNQSPETMVKAFEIVGLSKADVEERFGGLYRAFQYGAPPHGGMAAGVDRIVMLICGAQNLREITLFPMNQRAEDLLMGAPSPAALKQLRELNIRVVEQTKG</sequence>
<dbReference type="EC" id="6.1.1.23" evidence="1"/>
<dbReference type="EMBL" id="CP000248">
    <property type="protein sequence ID" value="ABD25782.1"/>
    <property type="molecule type" value="Genomic_DNA"/>
</dbReference>
<dbReference type="RefSeq" id="WP_011444996.1">
    <property type="nucleotide sequence ID" value="NC_007794.1"/>
</dbReference>
<dbReference type="SMR" id="Q2G8P1"/>
<dbReference type="STRING" id="279238.Saro_1338"/>
<dbReference type="KEGG" id="nar:Saro_1338"/>
<dbReference type="eggNOG" id="COG0173">
    <property type="taxonomic scope" value="Bacteria"/>
</dbReference>
<dbReference type="HOGENOM" id="CLU_014330_3_2_5"/>
<dbReference type="Proteomes" id="UP000009134">
    <property type="component" value="Chromosome"/>
</dbReference>
<dbReference type="GO" id="GO:0005737">
    <property type="term" value="C:cytoplasm"/>
    <property type="evidence" value="ECO:0007669"/>
    <property type="project" value="UniProtKB-SubCell"/>
</dbReference>
<dbReference type="GO" id="GO:0004815">
    <property type="term" value="F:aspartate-tRNA ligase activity"/>
    <property type="evidence" value="ECO:0007669"/>
    <property type="project" value="UniProtKB-UniRule"/>
</dbReference>
<dbReference type="GO" id="GO:0050560">
    <property type="term" value="F:aspartate-tRNA(Asn) ligase activity"/>
    <property type="evidence" value="ECO:0007669"/>
    <property type="project" value="UniProtKB-EC"/>
</dbReference>
<dbReference type="GO" id="GO:0005524">
    <property type="term" value="F:ATP binding"/>
    <property type="evidence" value="ECO:0007669"/>
    <property type="project" value="UniProtKB-UniRule"/>
</dbReference>
<dbReference type="GO" id="GO:0003676">
    <property type="term" value="F:nucleic acid binding"/>
    <property type="evidence" value="ECO:0007669"/>
    <property type="project" value="InterPro"/>
</dbReference>
<dbReference type="GO" id="GO:0006422">
    <property type="term" value="P:aspartyl-tRNA aminoacylation"/>
    <property type="evidence" value="ECO:0007669"/>
    <property type="project" value="UniProtKB-UniRule"/>
</dbReference>
<dbReference type="CDD" id="cd00777">
    <property type="entry name" value="AspRS_core"/>
    <property type="match status" value="1"/>
</dbReference>
<dbReference type="CDD" id="cd04317">
    <property type="entry name" value="EcAspRS_like_N"/>
    <property type="match status" value="1"/>
</dbReference>
<dbReference type="Gene3D" id="3.30.930.10">
    <property type="entry name" value="Bira Bifunctional Protein, Domain 2"/>
    <property type="match status" value="1"/>
</dbReference>
<dbReference type="Gene3D" id="3.30.1360.30">
    <property type="entry name" value="GAD-like domain"/>
    <property type="match status" value="1"/>
</dbReference>
<dbReference type="Gene3D" id="2.40.50.140">
    <property type="entry name" value="Nucleic acid-binding proteins"/>
    <property type="match status" value="1"/>
</dbReference>
<dbReference type="HAMAP" id="MF_00044">
    <property type="entry name" value="Asp_tRNA_synth_type1"/>
    <property type="match status" value="1"/>
</dbReference>
<dbReference type="InterPro" id="IPR004364">
    <property type="entry name" value="Aa-tRNA-synt_II"/>
</dbReference>
<dbReference type="InterPro" id="IPR006195">
    <property type="entry name" value="aa-tRNA-synth_II"/>
</dbReference>
<dbReference type="InterPro" id="IPR045864">
    <property type="entry name" value="aa-tRNA-synth_II/BPL/LPL"/>
</dbReference>
<dbReference type="InterPro" id="IPR004524">
    <property type="entry name" value="Asp-tRNA-ligase_1"/>
</dbReference>
<dbReference type="InterPro" id="IPR047089">
    <property type="entry name" value="Asp-tRNA-ligase_1_N"/>
</dbReference>
<dbReference type="InterPro" id="IPR002312">
    <property type="entry name" value="Asp/Asn-tRNA-synth_IIb"/>
</dbReference>
<dbReference type="InterPro" id="IPR047090">
    <property type="entry name" value="AspRS_core"/>
</dbReference>
<dbReference type="InterPro" id="IPR004115">
    <property type="entry name" value="GAD-like_sf"/>
</dbReference>
<dbReference type="InterPro" id="IPR029351">
    <property type="entry name" value="GAD_dom"/>
</dbReference>
<dbReference type="InterPro" id="IPR012340">
    <property type="entry name" value="NA-bd_OB-fold"/>
</dbReference>
<dbReference type="InterPro" id="IPR004365">
    <property type="entry name" value="NA-bd_OB_tRNA"/>
</dbReference>
<dbReference type="NCBIfam" id="TIGR00459">
    <property type="entry name" value="aspS_bact"/>
    <property type="match status" value="1"/>
</dbReference>
<dbReference type="NCBIfam" id="NF001750">
    <property type="entry name" value="PRK00476.1"/>
    <property type="match status" value="1"/>
</dbReference>
<dbReference type="PANTHER" id="PTHR22594:SF5">
    <property type="entry name" value="ASPARTATE--TRNA LIGASE, MITOCHONDRIAL"/>
    <property type="match status" value="1"/>
</dbReference>
<dbReference type="PANTHER" id="PTHR22594">
    <property type="entry name" value="ASPARTYL/LYSYL-TRNA SYNTHETASE"/>
    <property type="match status" value="1"/>
</dbReference>
<dbReference type="Pfam" id="PF02938">
    <property type="entry name" value="GAD"/>
    <property type="match status" value="1"/>
</dbReference>
<dbReference type="Pfam" id="PF00152">
    <property type="entry name" value="tRNA-synt_2"/>
    <property type="match status" value="1"/>
</dbReference>
<dbReference type="Pfam" id="PF01336">
    <property type="entry name" value="tRNA_anti-codon"/>
    <property type="match status" value="1"/>
</dbReference>
<dbReference type="PRINTS" id="PR01042">
    <property type="entry name" value="TRNASYNTHASP"/>
</dbReference>
<dbReference type="SUPFAM" id="SSF55681">
    <property type="entry name" value="Class II aaRS and biotin synthetases"/>
    <property type="match status" value="1"/>
</dbReference>
<dbReference type="SUPFAM" id="SSF55261">
    <property type="entry name" value="GAD domain-like"/>
    <property type="match status" value="1"/>
</dbReference>
<dbReference type="SUPFAM" id="SSF50249">
    <property type="entry name" value="Nucleic acid-binding proteins"/>
    <property type="match status" value="1"/>
</dbReference>
<dbReference type="PROSITE" id="PS50862">
    <property type="entry name" value="AA_TRNA_LIGASE_II"/>
    <property type="match status" value="1"/>
</dbReference>
<accession>Q2G8P1</accession>